<proteinExistence type="inferred from homology"/>
<feature type="chain" id="PRO_0000265658" description="Elongation factor 4">
    <location>
        <begin position="1"/>
        <end position="594"/>
    </location>
</feature>
<feature type="domain" description="tr-type G">
    <location>
        <begin position="2"/>
        <end position="184"/>
    </location>
</feature>
<feature type="binding site" evidence="1">
    <location>
        <begin position="14"/>
        <end position="19"/>
    </location>
    <ligand>
        <name>GTP</name>
        <dbReference type="ChEBI" id="CHEBI:37565"/>
    </ligand>
</feature>
<feature type="binding site" evidence="1">
    <location>
        <begin position="131"/>
        <end position="134"/>
    </location>
    <ligand>
        <name>GTP</name>
        <dbReference type="ChEBI" id="CHEBI:37565"/>
    </ligand>
</feature>
<evidence type="ECO:0000255" key="1">
    <source>
        <dbReference type="HAMAP-Rule" id="MF_00071"/>
    </source>
</evidence>
<accession>Q0BP65</accession>
<reference key="1">
    <citation type="journal article" date="2006" name="J. Bacteriol.">
        <title>Chromosome rearrangement and diversification of Francisella tularensis revealed by the type B (OSU18) genome sequence.</title>
        <authorList>
            <person name="Petrosino J.F."/>
            <person name="Xiang Q."/>
            <person name="Karpathy S.E."/>
            <person name="Jiang H."/>
            <person name="Yerrapragada S."/>
            <person name="Liu Y."/>
            <person name="Gioia J."/>
            <person name="Hemphill L."/>
            <person name="Gonzalez A."/>
            <person name="Raghavan T.M."/>
            <person name="Uzman A."/>
            <person name="Fox G.E."/>
            <person name="Highlander S."/>
            <person name="Reichard M."/>
            <person name="Morton R.J."/>
            <person name="Clinkenbeard K.D."/>
            <person name="Weinstock G.M."/>
        </authorList>
    </citation>
    <scope>NUCLEOTIDE SEQUENCE [LARGE SCALE GENOMIC DNA]</scope>
    <source>
        <strain>OSU18</strain>
    </source>
</reference>
<gene>
    <name evidence="1" type="primary">lepA</name>
    <name type="ordered locus">FTH_0067</name>
</gene>
<comment type="function">
    <text evidence="1">Required for accurate and efficient protein synthesis under certain stress conditions. May act as a fidelity factor of the translation reaction, by catalyzing a one-codon backward translocation of tRNAs on improperly translocated ribosomes. Back-translocation proceeds from a post-translocation (POST) complex to a pre-translocation (PRE) complex, thus giving elongation factor G a second chance to translocate the tRNAs correctly. Binds to ribosomes in a GTP-dependent manner.</text>
</comment>
<comment type="catalytic activity">
    <reaction evidence="1">
        <text>GTP + H2O = GDP + phosphate + H(+)</text>
        <dbReference type="Rhea" id="RHEA:19669"/>
        <dbReference type="ChEBI" id="CHEBI:15377"/>
        <dbReference type="ChEBI" id="CHEBI:15378"/>
        <dbReference type="ChEBI" id="CHEBI:37565"/>
        <dbReference type="ChEBI" id="CHEBI:43474"/>
        <dbReference type="ChEBI" id="CHEBI:58189"/>
        <dbReference type="EC" id="3.6.5.n1"/>
    </reaction>
</comment>
<comment type="subcellular location">
    <subcellularLocation>
        <location evidence="1">Cell inner membrane</location>
        <topology evidence="1">Peripheral membrane protein</topology>
        <orientation evidence="1">Cytoplasmic side</orientation>
    </subcellularLocation>
</comment>
<comment type="similarity">
    <text evidence="1">Belongs to the TRAFAC class translation factor GTPase superfamily. Classic translation factor GTPase family. LepA subfamily.</text>
</comment>
<protein>
    <recommendedName>
        <fullName evidence="1">Elongation factor 4</fullName>
        <shortName evidence="1">EF-4</shortName>
        <ecNumber evidence="1">3.6.5.n1</ecNumber>
    </recommendedName>
    <alternativeName>
        <fullName evidence="1">Ribosomal back-translocase LepA</fullName>
    </alternativeName>
</protein>
<sequence>MKNIRNFSIIAHIDHGKSTLSDRFIQVCNGLSEREMKEQVLDSMDIERERGITIKAQSVTLDYTARDGQTYQLNFIDTPGHVDFSYEVSRSLAACEGALLVVDAAQGVEAQTVANCYTAIEQNLEVIPILNKIDLPFAEPDRVAQEIEEIIGIDATGATTCSAKIGIGVEDVLETIVAKVPAPEGDVNAKLQALIIDSWFDNYLGVVSLVRVKNGTIKKGEKFKVMSTGVAYQVDRLGVFTPKMKDLDHLKAGEVGFIVAGIKDIHGAPVGDTLTHAHNPTDKPVPGFKKVQPQVYAGMFTISSDDYPDFREALEKLSLNDASLFFEPEVSQALGFGFRCGFLGMLHMEIIQERLEREYNLDLITSAPTVVYKAIKKDGEIIEVDNLSKLPEPGAIAEIQEPIVRANILVPKDYVGSVITICIEKRGVQVDLNYVGNQVSITYDLPMIEVVSDFFDTLKSVTKGYGSLDYELIRYEPANMVCLDVLINGDKVDALASIVHKDQAKYKGRELVERLKELIPRQMFEVAIQAAIGGTIVARSTVKALRKNVLAKCYGGDVSRKKKLLEKQKEGKKRMKNIGSVEIPQEAFLSVLKK</sequence>
<name>LEPA_FRATO</name>
<keyword id="KW-0997">Cell inner membrane</keyword>
<keyword id="KW-1003">Cell membrane</keyword>
<keyword id="KW-0342">GTP-binding</keyword>
<keyword id="KW-0378">Hydrolase</keyword>
<keyword id="KW-0472">Membrane</keyword>
<keyword id="KW-0547">Nucleotide-binding</keyword>
<keyword id="KW-0648">Protein biosynthesis</keyword>
<dbReference type="EC" id="3.6.5.n1" evidence="1"/>
<dbReference type="EMBL" id="CP000437">
    <property type="protein sequence ID" value="ABI82119.1"/>
    <property type="molecule type" value="Genomic_DNA"/>
</dbReference>
<dbReference type="RefSeq" id="WP_003014022.1">
    <property type="nucleotide sequence ID" value="NC_017463.1"/>
</dbReference>
<dbReference type="SMR" id="Q0BP65"/>
<dbReference type="KEGG" id="fth:FTH_0067"/>
<dbReference type="GO" id="GO:0005886">
    <property type="term" value="C:plasma membrane"/>
    <property type="evidence" value="ECO:0007669"/>
    <property type="project" value="UniProtKB-SubCell"/>
</dbReference>
<dbReference type="GO" id="GO:0005525">
    <property type="term" value="F:GTP binding"/>
    <property type="evidence" value="ECO:0007669"/>
    <property type="project" value="UniProtKB-UniRule"/>
</dbReference>
<dbReference type="GO" id="GO:0003924">
    <property type="term" value="F:GTPase activity"/>
    <property type="evidence" value="ECO:0007669"/>
    <property type="project" value="UniProtKB-UniRule"/>
</dbReference>
<dbReference type="GO" id="GO:0097216">
    <property type="term" value="F:guanosine tetraphosphate binding"/>
    <property type="evidence" value="ECO:0007669"/>
    <property type="project" value="UniProtKB-ARBA"/>
</dbReference>
<dbReference type="GO" id="GO:0043022">
    <property type="term" value="F:ribosome binding"/>
    <property type="evidence" value="ECO:0007669"/>
    <property type="project" value="UniProtKB-UniRule"/>
</dbReference>
<dbReference type="GO" id="GO:0003746">
    <property type="term" value="F:translation elongation factor activity"/>
    <property type="evidence" value="ECO:0007669"/>
    <property type="project" value="UniProtKB-UniRule"/>
</dbReference>
<dbReference type="GO" id="GO:0045727">
    <property type="term" value="P:positive regulation of translation"/>
    <property type="evidence" value="ECO:0007669"/>
    <property type="project" value="UniProtKB-UniRule"/>
</dbReference>
<dbReference type="CDD" id="cd03699">
    <property type="entry name" value="EF4_II"/>
    <property type="match status" value="1"/>
</dbReference>
<dbReference type="CDD" id="cd16260">
    <property type="entry name" value="EF4_III"/>
    <property type="match status" value="1"/>
</dbReference>
<dbReference type="CDD" id="cd01890">
    <property type="entry name" value="LepA"/>
    <property type="match status" value="1"/>
</dbReference>
<dbReference type="CDD" id="cd03709">
    <property type="entry name" value="lepA_C"/>
    <property type="match status" value="1"/>
</dbReference>
<dbReference type="FunFam" id="3.40.50.300:FF:000078">
    <property type="entry name" value="Elongation factor 4"/>
    <property type="match status" value="1"/>
</dbReference>
<dbReference type="FunFam" id="2.40.30.10:FF:000015">
    <property type="entry name" value="Translation factor GUF1, mitochondrial"/>
    <property type="match status" value="1"/>
</dbReference>
<dbReference type="FunFam" id="3.30.70.240:FF:000007">
    <property type="entry name" value="Translation factor GUF1, mitochondrial"/>
    <property type="match status" value="1"/>
</dbReference>
<dbReference type="FunFam" id="3.30.70.2570:FF:000001">
    <property type="entry name" value="Translation factor GUF1, mitochondrial"/>
    <property type="match status" value="1"/>
</dbReference>
<dbReference type="FunFam" id="3.30.70.870:FF:000004">
    <property type="entry name" value="Translation factor GUF1, mitochondrial"/>
    <property type="match status" value="1"/>
</dbReference>
<dbReference type="Gene3D" id="3.30.70.240">
    <property type="match status" value="1"/>
</dbReference>
<dbReference type="Gene3D" id="3.30.70.2570">
    <property type="entry name" value="Elongation factor 4, C-terminal domain"/>
    <property type="match status" value="1"/>
</dbReference>
<dbReference type="Gene3D" id="3.30.70.870">
    <property type="entry name" value="Elongation Factor G (Translational Gtpase), domain 3"/>
    <property type="match status" value="1"/>
</dbReference>
<dbReference type="Gene3D" id="3.40.50.300">
    <property type="entry name" value="P-loop containing nucleotide triphosphate hydrolases"/>
    <property type="match status" value="1"/>
</dbReference>
<dbReference type="Gene3D" id="2.40.30.10">
    <property type="entry name" value="Translation factors"/>
    <property type="match status" value="1"/>
</dbReference>
<dbReference type="HAMAP" id="MF_00071">
    <property type="entry name" value="LepA"/>
    <property type="match status" value="1"/>
</dbReference>
<dbReference type="InterPro" id="IPR006297">
    <property type="entry name" value="EF-4"/>
</dbReference>
<dbReference type="InterPro" id="IPR035647">
    <property type="entry name" value="EFG_III/V"/>
</dbReference>
<dbReference type="InterPro" id="IPR000640">
    <property type="entry name" value="EFG_V-like"/>
</dbReference>
<dbReference type="InterPro" id="IPR004161">
    <property type="entry name" value="EFTu-like_2"/>
</dbReference>
<dbReference type="InterPro" id="IPR031157">
    <property type="entry name" value="G_TR_CS"/>
</dbReference>
<dbReference type="InterPro" id="IPR038363">
    <property type="entry name" value="LepA_C_sf"/>
</dbReference>
<dbReference type="InterPro" id="IPR013842">
    <property type="entry name" value="LepA_CTD"/>
</dbReference>
<dbReference type="InterPro" id="IPR035654">
    <property type="entry name" value="LepA_IV"/>
</dbReference>
<dbReference type="InterPro" id="IPR027417">
    <property type="entry name" value="P-loop_NTPase"/>
</dbReference>
<dbReference type="InterPro" id="IPR005225">
    <property type="entry name" value="Small_GTP-bd"/>
</dbReference>
<dbReference type="InterPro" id="IPR000795">
    <property type="entry name" value="T_Tr_GTP-bd_dom"/>
</dbReference>
<dbReference type="NCBIfam" id="TIGR01393">
    <property type="entry name" value="lepA"/>
    <property type="match status" value="1"/>
</dbReference>
<dbReference type="NCBIfam" id="TIGR00231">
    <property type="entry name" value="small_GTP"/>
    <property type="match status" value="1"/>
</dbReference>
<dbReference type="PANTHER" id="PTHR43512:SF4">
    <property type="entry name" value="TRANSLATION FACTOR GUF1 HOMOLOG, CHLOROPLASTIC"/>
    <property type="match status" value="1"/>
</dbReference>
<dbReference type="PANTHER" id="PTHR43512">
    <property type="entry name" value="TRANSLATION FACTOR GUF1-RELATED"/>
    <property type="match status" value="1"/>
</dbReference>
<dbReference type="Pfam" id="PF00679">
    <property type="entry name" value="EFG_C"/>
    <property type="match status" value="1"/>
</dbReference>
<dbReference type="Pfam" id="PF00009">
    <property type="entry name" value="GTP_EFTU"/>
    <property type="match status" value="1"/>
</dbReference>
<dbReference type="Pfam" id="PF03144">
    <property type="entry name" value="GTP_EFTU_D2"/>
    <property type="match status" value="1"/>
</dbReference>
<dbReference type="Pfam" id="PF06421">
    <property type="entry name" value="LepA_C"/>
    <property type="match status" value="1"/>
</dbReference>
<dbReference type="PRINTS" id="PR00315">
    <property type="entry name" value="ELONGATNFCT"/>
</dbReference>
<dbReference type="SUPFAM" id="SSF54980">
    <property type="entry name" value="EF-G C-terminal domain-like"/>
    <property type="match status" value="2"/>
</dbReference>
<dbReference type="SUPFAM" id="SSF52540">
    <property type="entry name" value="P-loop containing nucleoside triphosphate hydrolases"/>
    <property type="match status" value="1"/>
</dbReference>
<dbReference type="PROSITE" id="PS00301">
    <property type="entry name" value="G_TR_1"/>
    <property type="match status" value="1"/>
</dbReference>
<dbReference type="PROSITE" id="PS51722">
    <property type="entry name" value="G_TR_2"/>
    <property type="match status" value="1"/>
</dbReference>
<organism>
    <name type="scientific">Francisella tularensis subsp. holarctica (strain OSU18)</name>
    <dbReference type="NCBI Taxonomy" id="393011"/>
    <lineage>
        <taxon>Bacteria</taxon>
        <taxon>Pseudomonadati</taxon>
        <taxon>Pseudomonadota</taxon>
        <taxon>Gammaproteobacteria</taxon>
        <taxon>Thiotrichales</taxon>
        <taxon>Francisellaceae</taxon>
        <taxon>Francisella</taxon>
    </lineage>
</organism>